<sequence length="670" mass="73763">MESQASENGSQTSSGVTDDYSSWYIEEPLGAEEVQPEGVNPLCQPTVPPALHHACLASLSLLALLLLALLVRRRRLWPHCAHCRPGLPSPVDFLAGNRSWTVPTAVFVALFSNLCLLLPDENPLPFLNRTAASSPDGEPETSRGPWKLLALLYYPALYYPLAACATAGHRAAYLLGTVLSWVHVSVQVWQRAECPQDPKIYKHYSLLASLPLLLSLGFLSLWYPVQVVQSIRHRTGAGSQGLQTSYSEKYLRALLCPKKLDSCSHPASKRSLLSRAWAFSQHSIYTPEPGFCLPLKLVISATLTGTATYQVALLLLVSVVPTVQKVRAGITTDVSYLLAGFGIVLSEDRQEVVELVKHHLWAVEACYISALVLSCSLTFLLLIRSLRTHRANLKALHRGAALDLGPPLQSTHPSRQAIVCWMSFSAYQTAFSCLGLLVQQVIFFLGTTILAFLVFVPLLHGRNLLLLRSLESTWPFWLTLVLAVILQNIAANWVFLESHHGYPELTNRRMLCVATFLLFPINMLVGAIMAIWRVLLSSLYNTVHLGQMDLSLLPQRAASLDPGYHTYRNFLRIEASQSHPGVIAFCALLLHVPSPQPQPPLAPQDSLRPAAEEEGMQLLQTKDLMAKGAGPKGSRSRARWGLAYTLLHNPSLQAFRKAALTSAKANGTQP</sequence>
<organism>
    <name type="scientific">Rattus norvegicus</name>
    <name type="common">Rat</name>
    <dbReference type="NCBI Taxonomy" id="10116"/>
    <lineage>
        <taxon>Eukaryota</taxon>
        <taxon>Metazoa</taxon>
        <taxon>Chordata</taxon>
        <taxon>Craniata</taxon>
        <taxon>Vertebrata</taxon>
        <taxon>Euteleostomi</taxon>
        <taxon>Mammalia</taxon>
        <taxon>Eutheria</taxon>
        <taxon>Euarchontoglires</taxon>
        <taxon>Glires</taxon>
        <taxon>Rodentia</taxon>
        <taxon>Myomorpha</taxon>
        <taxon>Muroidea</taxon>
        <taxon>Muridae</taxon>
        <taxon>Murinae</taxon>
        <taxon>Rattus</taxon>
    </lineage>
</organism>
<comment type="function">
    <text evidence="3">Functions as a retinol transporter. Accepts all-trans retinol from the extracellular retinol-binding protein RBP4, facilitates retinol transport across the cell membrane, and then transfers retinol to the cytoplasmic retinol-binding protein RBP1. Retinol uptake is enhanced by LRAT, an enzyme that converts retinol to all-trans retinyl esters, the storage forms of vitamin A. Contributes to the activation of a signaling cascade that depends on retinol transport and LRAT-dependent generation of retinol metabolites that then trigger activation of JAK2 and its target STAT5, and ultimately increase the expression of SOCS3 and inhibit cellular responses to insulin. Important for the homeostasis of vitamin A and its derivatives, such as retinoic acid. STRA6-mediated transport is particularly important in the eye, and under conditions of dietary vitamin A deficiency. Does not transport retinoic acid.</text>
</comment>
<comment type="subunit">
    <text evidence="1 3">Homodimer (By similarity). Interacts with JAK2 and STAT5. Interacts (via extracellular domains) with RBP4. Interacts (via cytoplasmic domains) with RBP1 (By similarity).</text>
</comment>
<comment type="subcellular location">
    <subcellularLocation>
        <location evidence="2">Cell membrane</location>
        <topology evidence="2">Multi-pass membrane protein</topology>
    </subcellularLocation>
    <text evidence="2">In the retinal pigment epithelium localizes to the basolateral membrane.</text>
</comment>
<comment type="domain">
    <text evidence="1 2">Contrary to predictions, contains nine transmembrane helices, with an extracellular N-terminus and a cytoplasmic C-terminus (By similarity). Besides, contains one long helix that dips into the membrane and then runs more or less parallel to the membrane surface (By similarity).</text>
</comment>
<comment type="PTM">
    <text evidence="3">Phosphorylated on tyrosine residues in response to RBP4 binding. Phosphorylation requires the presence of LRAT, suggesting it may be triggered by the uptake of retinol that is then metabolized within the cell to retinoids that function as signaling molecules.</text>
</comment>
<feature type="chain" id="PRO_0000311231" description="Receptor for retinol uptake STRA6">
    <location>
        <begin position="1"/>
        <end position="670"/>
    </location>
</feature>
<feature type="topological domain" description="Extracellular" evidence="1">
    <location>
        <begin position="1"/>
        <end position="50"/>
    </location>
</feature>
<feature type="transmembrane region" description="Helical" evidence="1">
    <location>
        <begin position="51"/>
        <end position="71"/>
    </location>
</feature>
<feature type="topological domain" description="Cytoplasmic" evidence="1">
    <location>
        <begin position="72"/>
        <end position="98"/>
    </location>
</feature>
<feature type="transmembrane region" description="Helical" evidence="1">
    <location>
        <begin position="99"/>
        <end position="119"/>
    </location>
</feature>
<feature type="topological domain" description="Extracellular" evidence="1">
    <location>
        <begin position="120"/>
        <end position="144"/>
    </location>
</feature>
<feature type="transmembrane region" description="Helical" evidence="1">
    <location>
        <begin position="145"/>
        <end position="165"/>
    </location>
</feature>
<feature type="topological domain" description="Cytoplasmic" evidence="1">
    <location>
        <begin position="166"/>
        <end position="168"/>
    </location>
</feature>
<feature type="transmembrane region" description="Helical" evidence="1">
    <location>
        <begin position="169"/>
        <end position="189"/>
    </location>
</feature>
<feature type="topological domain" description="Extracellular" evidence="1">
    <location>
        <begin position="190"/>
        <end position="205"/>
    </location>
</feature>
<feature type="transmembrane region" description="Helical" evidence="1">
    <location>
        <begin position="206"/>
        <end position="226"/>
    </location>
</feature>
<feature type="topological domain" description="Cytoplasmic" evidence="1">
    <location>
        <begin position="227"/>
        <end position="296"/>
    </location>
</feature>
<feature type="transmembrane region" description="Helical" evidence="1">
    <location>
        <begin position="297"/>
        <end position="317"/>
    </location>
</feature>
<feature type="topological domain" description="Extracellular" evidence="1">
    <location>
        <begin position="318"/>
        <end position="368"/>
    </location>
</feature>
<feature type="transmembrane region" description="Helical" evidence="1">
    <location>
        <begin position="369"/>
        <end position="389"/>
    </location>
</feature>
<feature type="topological domain" description="Cytoplasmic" evidence="1">
    <location>
        <begin position="390"/>
        <end position="423"/>
    </location>
</feature>
<feature type="transmembrane region" description="Helical" evidence="1">
    <location>
        <begin position="424"/>
        <end position="444"/>
    </location>
</feature>
<feature type="topological domain" description="Extracellular" evidence="1">
    <location>
        <begin position="445"/>
        <end position="474"/>
    </location>
</feature>
<feature type="transmembrane region" description="Helical" evidence="1">
    <location>
        <begin position="475"/>
        <end position="495"/>
    </location>
</feature>
<feature type="topological domain" description="Cytoplasmic" evidence="1">
    <location>
        <begin position="496"/>
        <end position="510"/>
    </location>
</feature>
<feature type="intramembrane region" description="Helical" evidence="1">
    <location>
        <begin position="511"/>
        <end position="548"/>
    </location>
</feature>
<feature type="topological domain" description="Cytoplasmic" evidence="1">
    <location>
        <begin position="549"/>
        <end position="670"/>
    </location>
</feature>
<feature type="region of interest" description="Interaction with RBP1" evidence="3">
    <location>
        <begin position="235"/>
        <end position="294"/>
    </location>
</feature>
<feature type="modified residue" description="Phosphotyrosine" evidence="3">
    <location>
        <position position="644"/>
    </location>
</feature>
<feature type="glycosylation site" description="N-linked (GlcNAc...) asparagine" evidence="4">
    <location>
        <position position="8"/>
    </location>
</feature>
<evidence type="ECO:0000250" key="1">
    <source>
        <dbReference type="UniProtKB" id="F1RAX4"/>
    </source>
</evidence>
<evidence type="ECO:0000250" key="2">
    <source>
        <dbReference type="UniProtKB" id="Q0V8E7"/>
    </source>
</evidence>
<evidence type="ECO:0000250" key="3">
    <source>
        <dbReference type="UniProtKB" id="Q9BX79"/>
    </source>
</evidence>
<evidence type="ECO:0000255" key="4"/>
<keyword id="KW-1003">Cell membrane</keyword>
<keyword id="KW-0325">Glycoprotein</keyword>
<keyword id="KW-0472">Membrane</keyword>
<keyword id="KW-0597">Phosphoprotein</keyword>
<keyword id="KW-0675">Receptor</keyword>
<keyword id="KW-1185">Reference proteome</keyword>
<keyword id="KW-0683">Retinol-binding</keyword>
<keyword id="KW-0812">Transmembrane</keyword>
<keyword id="KW-1133">Transmembrane helix</keyword>
<keyword id="KW-0813">Transport</keyword>
<keyword id="KW-0845">Vitamin A</keyword>
<name>STRA6_RAT</name>
<protein>
    <recommendedName>
        <fullName>Receptor for retinol uptake STRA6</fullName>
    </recommendedName>
    <alternativeName>
        <fullName>Retinol-binding protein receptor STRA6</fullName>
    </alternativeName>
    <alternativeName>
        <fullName>Stimulated by retinoic acid gene 6 protein homolog</fullName>
    </alternativeName>
</protein>
<reference key="1">
    <citation type="journal article" date="2004" name="Genome Res.">
        <title>The status, quality, and expansion of the NIH full-length cDNA project: the Mammalian Gene Collection (MGC).</title>
        <authorList>
            <consortium name="The MGC Project Team"/>
        </authorList>
    </citation>
    <scope>NUCLEOTIDE SEQUENCE [LARGE SCALE MRNA]</scope>
    <source>
        <tissue>Placenta</tissue>
    </source>
</reference>
<proteinExistence type="evidence at transcript level"/>
<gene>
    <name type="primary">Stra6</name>
</gene>
<dbReference type="EMBL" id="BC097373">
    <property type="protein sequence ID" value="AAH97373.1"/>
    <property type="molecule type" value="mRNA"/>
</dbReference>
<dbReference type="RefSeq" id="NP_001025095.1">
    <property type="nucleotide sequence ID" value="NM_001029924.2"/>
</dbReference>
<dbReference type="SMR" id="Q4QR83"/>
<dbReference type="FunCoup" id="Q4QR83">
    <property type="interactions" value="35"/>
</dbReference>
<dbReference type="STRING" id="10116.ENSRNOP00000011074"/>
<dbReference type="GlyCosmos" id="Q4QR83">
    <property type="glycosylation" value="1 site, No reported glycans"/>
</dbReference>
<dbReference type="GlyGen" id="Q4QR83">
    <property type="glycosylation" value="1 site"/>
</dbReference>
<dbReference type="PhosphoSitePlus" id="Q4QR83"/>
<dbReference type="PaxDb" id="10116-ENSRNOP00000011074"/>
<dbReference type="Ensembl" id="ENSRNOT00000011074.7">
    <property type="protein sequence ID" value="ENSRNOP00000011074.7"/>
    <property type="gene ID" value="ENSRNOG00000008312.8"/>
</dbReference>
<dbReference type="GeneID" id="363071"/>
<dbReference type="KEGG" id="rno:363071"/>
<dbReference type="UCSC" id="RGD:1307551">
    <property type="organism name" value="rat"/>
</dbReference>
<dbReference type="AGR" id="RGD:1307551"/>
<dbReference type="CTD" id="64220"/>
<dbReference type="RGD" id="1307551">
    <property type="gene designation" value="Stra6"/>
</dbReference>
<dbReference type="eggNOG" id="ENOG502QRSS">
    <property type="taxonomic scope" value="Eukaryota"/>
</dbReference>
<dbReference type="GeneTree" id="ENSGT00940000153246"/>
<dbReference type="InParanoid" id="Q4QR83"/>
<dbReference type="OrthoDB" id="83908at9989"/>
<dbReference type="PhylomeDB" id="Q4QR83"/>
<dbReference type="TreeFam" id="TF331851"/>
<dbReference type="Reactome" id="R-RNO-2453902">
    <property type="pathway name" value="The canonical retinoid cycle in rods (twilight vision)"/>
</dbReference>
<dbReference type="PRO" id="PR:Q4QR83"/>
<dbReference type="Proteomes" id="UP000002494">
    <property type="component" value="Chromosome 8"/>
</dbReference>
<dbReference type="Bgee" id="ENSRNOG00000008312">
    <property type="expression patterns" value="Expressed in adult mammalian kidney and 13 other cell types or tissues"/>
</dbReference>
<dbReference type="ExpressionAtlas" id="Q4QR83">
    <property type="expression patterns" value="baseline and differential"/>
</dbReference>
<dbReference type="GO" id="GO:0005886">
    <property type="term" value="C:plasma membrane"/>
    <property type="evidence" value="ECO:0000250"/>
    <property type="project" value="UniProtKB"/>
</dbReference>
<dbReference type="GO" id="GO:0016918">
    <property type="term" value="F:retinal binding"/>
    <property type="evidence" value="ECO:0007669"/>
    <property type="project" value="UniProtKB-KW"/>
</dbReference>
<dbReference type="GO" id="GO:0019841">
    <property type="term" value="F:retinol binding"/>
    <property type="evidence" value="ECO:0007669"/>
    <property type="project" value="UniProtKB-KW"/>
</dbReference>
<dbReference type="GO" id="GO:0034632">
    <property type="term" value="F:retinol transmembrane transporter activity"/>
    <property type="evidence" value="ECO:0000250"/>
    <property type="project" value="UniProtKB"/>
</dbReference>
<dbReference type="GO" id="GO:0038023">
    <property type="term" value="F:signaling receptor activity"/>
    <property type="evidence" value="ECO:0007669"/>
    <property type="project" value="InterPro"/>
</dbReference>
<dbReference type="GO" id="GO:0030325">
    <property type="term" value="P:adrenal gland development"/>
    <property type="evidence" value="ECO:0000266"/>
    <property type="project" value="RGD"/>
</dbReference>
<dbReference type="GO" id="GO:0061143">
    <property type="term" value="P:alveolar primary septum development"/>
    <property type="evidence" value="ECO:0000266"/>
    <property type="project" value="RGD"/>
</dbReference>
<dbReference type="GO" id="GO:0048844">
    <property type="term" value="P:artery morphogenesis"/>
    <property type="evidence" value="ECO:0000266"/>
    <property type="project" value="RGD"/>
</dbReference>
<dbReference type="GO" id="GO:0001568">
    <property type="term" value="P:blood vessel development"/>
    <property type="evidence" value="ECO:0000266"/>
    <property type="project" value="RGD"/>
</dbReference>
<dbReference type="GO" id="GO:0043010">
    <property type="term" value="P:camera-type eye development"/>
    <property type="evidence" value="ECO:0000250"/>
    <property type="project" value="UniProtKB"/>
</dbReference>
<dbReference type="GO" id="GO:0050890">
    <property type="term" value="P:cognition"/>
    <property type="evidence" value="ECO:0000266"/>
    <property type="project" value="RGD"/>
</dbReference>
<dbReference type="GO" id="GO:0048589">
    <property type="term" value="P:developmental growth"/>
    <property type="evidence" value="ECO:0000266"/>
    <property type="project" value="RGD"/>
</dbReference>
<dbReference type="GO" id="GO:0060539">
    <property type="term" value="P:diaphragm development"/>
    <property type="evidence" value="ECO:0000266"/>
    <property type="project" value="RGD"/>
</dbReference>
<dbReference type="GO" id="GO:0048546">
    <property type="term" value="P:digestive tract morphogenesis"/>
    <property type="evidence" value="ECO:0000266"/>
    <property type="project" value="RGD"/>
</dbReference>
<dbReference type="GO" id="GO:0097070">
    <property type="term" value="P:ductus arteriosus closure"/>
    <property type="evidence" value="ECO:0000266"/>
    <property type="project" value="RGD"/>
</dbReference>
<dbReference type="GO" id="GO:0043583">
    <property type="term" value="P:ear development"/>
    <property type="evidence" value="ECO:0000266"/>
    <property type="project" value="RGD"/>
</dbReference>
<dbReference type="GO" id="GO:0060900">
    <property type="term" value="P:embryonic camera-type eye formation"/>
    <property type="evidence" value="ECO:0000266"/>
    <property type="project" value="RGD"/>
</dbReference>
<dbReference type="GO" id="GO:0048566">
    <property type="term" value="P:embryonic digestive tract development"/>
    <property type="evidence" value="ECO:0000266"/>
    <property type="project" value="RGD"/>
</dbReference>
<dbReference type="GO" id="GO:0051649">
    <property type="term" value="P:establishment of localization in cell"/>
    <property type="evidence" value="ECO:0000266"/>
    <property type="project" value="RGD"/>
</dbReference>
<dbReference type="GO" id="GO:0061029">
    <property type="term" value="P:eyelid development in camera-type eye"/>
    <property type="evidence" value="ECO:0000266"/>
    <property type="project" value="RGD"/>
</dbReference>
<dbReference type="GO" id="GO:0060325">
    <property type="term" value="P:face morphogenesis"/>
    <property type="evidence" value="ECO:0000266"/>
    <property type="project" value="RGD"/>
</dbReference>
<dbReference type="GO" id="GO:0007631">
    <property type="term" value="P:feeding behavior"/>
    <property type="evidence" value="ECO:0000266"/>
    <property type="project" value="RGD"/>
</dbReference>
<dbReference type="GO" id="GO:0030540">
    <property type="term" value="P:female genitalia development"/>
    <property type="evidence" value="ECO:0000266"/>
    <property type="project" value="RGD"/>
</dbReference>
<dbReference type="GO" id="GO:0060322">
    <property type="term" value="P:head development"/>
    <property type="evidence" value="ECO:0000266"/>
    <property type="project" value="RGD"/>
</dbReference>
<dbReference type="GO" id="GO:0060323">
    <property type="term" value="P:head morphogenesis"/>
    <property type="evidence" value="ECO:0000266"/>
    <property type="project" value="RGD"/>
</dbReference>
<dbReference type="GO" id="GO:0007507">
    <property type="term" value="P:heart development"/>
    <property type="evidence" value="ECO:0000266"/>
    <property type="project" value="RGD"/>
</dbReference>
<dbReference type="GO" id="GO:0001822">
    <property type="term" value="P:kidney development"/>
    <property type="evidence" value="ECO:0000266"/>
    <property type="project" value="RGD"/>
</dbReference>
<dbReference type="GO" id="GO:0007612">
    <property type="term" value="P:learning"/>
    <property type="evidence" value="ECO:0000266"/>
    <property type="project" value="RGD"/>
</dbReference>
<dbReference type="GO" id="GO:0048286">
    <property type="term" value="P:lung alveolus development"/>
    <property type="evidence" value="ECO:0000266"/>
    <property type="project" value="RGD"/>
</dbReference>
<dbReference type="GO" id="GO:0030324">
    <property type="term" value="P:lung development"/>
    <property type="evidence" value="ECO:0000266"/>
    <property type="project" value="RGD"/>
</dbReference>
<dbReference type="GO" id="GO:0060426">
    <property type="term" value="P:lung vasculature development"/>
    <property type="evidence" value="ECO:0000266"/>
    <property type="project" value="RGD"/>
</dbReference>
<dbReference type="GO" id="GO:0050905">
    <property type="term" value="P:neuromuscular process"/>
    <property type="evidence" value="ECO:0000266"/>
    <property type="project" value="RGD"/>
</dbReference>
<dbReference type="GO" id="GO:0043585">
    <property type="term" value="P:nose morphogenesis"/>
    <property type="evidence" value="ECO:0000266"/>
    <property type="project" value="RGD"/>
</dbReference>
<dbReference type="GO" id="GO:0061205">
    <property type="term" value="P:paramesonephric duct development"/>
    <property type="evidence" value="ECO:0000266"/>
    <property type="project" value="RGD"/>
</dbReference>
<dbReference type="GO" id="GO:0048520">
    <property type="term" value="P:positive regulation of behavior"/>
    <property type="evidence" value="ECO:0000266"/>
    <property type="project" value="RGD"/>
</dbReference>
<dbReference type="GO" id="GO:0046427">
    <property type="term" value="P:positive regulation of receptor signaling pathway via JAK-STAT"/>
    <property type="evidence" value="ECO:0000266"/>
    <property type="project" value="RGD"/>
</dbReference>
<dbReference type="GO" id="GO:0061156">
    <property type="term" value="P:pulmonary artery morphogenesis"/>
    <property type="evidence" value="ECO:0000266"/>
    <property type="project" value="RGD"/>
</dbReference>
<dbReference type="GO" id="GO:0003184">
    <property type="term" value="P:pulmonary valve morphogenesis"/>
    <property type="evidence" value="ECO:0000266"/>
    <property type="project" value="RGD"/>
</dbReference>
<dbReference type="GO" id="GO:0032526">
    <property type="term" value="P:response to retinoic acid"/>
    <property type="evidence" value="ECO:0000270"/>
    <property type="project" value="RGD"/>
</dbReference>
<dbReference type="GO" id="GO:0034633">
    <property type="term" value="P:retinol transport"/>
    <property type="evidence" value="ECO:0000250"/>
    <property type="project" value="UniProtKB"/>
</dbReference>
<dbReference type="GO" id="GO:0048745">
    <property type="term" value="P:smooth muscle tissue development"/>
    <property type="evidence" value="ECO:0000266"/>
    <property type="project" value="RGD"/>
</dbReference>
<dbReference type="GO" id="GO:0061038">
    <property type="term" value="P:uterus morphogenesis"/>
    <property type="evidence" value="ECO:0000266"/>
    <property type="project" value="RGD"/>
</dbReference>
<dbReference type="GO" id="GO:0003281">
    <property type="term" value="P:ventricular septum development"/>
    <property type="evidence" value="ECO:0000266"/>
    <property type="project" value="RGD"/>
</dbReference>
<dbReference type="GO" id="GO:0071939">
    <property type="term" value="P:vitamin A import into cell"/>
    <property type="evidence" value="ECO:0000318"/>
    <property type="project" value="GO_Central"/>
</dbReference>
<dbReference type="GO" id="GO:0042297">
    <property type="term" value="P:vocal learning"/>
    <property type="evidence" value="ECO:0000266"/>
    <property type="project" value="RGD"/>
</dbReference>
<dbReference type="InterPro" id="IPR026612">
    <property type="entry name" value="STRA6-like"/>
</dbReference>
<dbReference type="PANTHER" id="PTHR21444">
    <property type="entry name" value="COILED-COIL DOMAIN-CONTAINING PROTEIN 180"/>
    <property type="match status" value="1"/>
</dbReference>
<dbReference type="PANTHER" id="PTHR21444:SF16">
    <property type="entry name" value="RECEPTOR FOR RETINOL UPTAKE STRA6"/>
    <property type="match status" value="1"/>
</dbReference>
<dbReference type="Pfam" id="PF14752">
    <property type="entry name" value="RBP_receptor"/>
    <property type="match status" value="1"/>
</dbReference>
<accession>Q4QR83</accession>